<name>LPXB_BURMS</name>
<organism>
    <name type="scientific">Burkholderia mallei (strain SAVP1)</name>
    <dbReference type="NCBI Taxonomy" id="320388"/>
    <lineage>
        <taxon>Bacteria</taxon>
        <taxon>Pseudomonadati</taxon>
        <taxon>Pseudomonadota</taxon>
        <taxon>Betaproteobacteria</taxon>
        <taxon>Burkholderiales</taxon>
        <taxon>Burkholderiaceae</taxon>
        <taxon>Burkholderia</taxon>
        <taxon>pseudomallei group</taxon>
    </lineage>
</organism>
<evidence type="ECO:0000255" key="1">
    <source>
        <dbReference type="HAMAP-Rule" id="MF_00392"/>
    </source>
</evidence>
<proteinExistence type="inferred from homology"/>
<sequence>MAFQLTPLRVALVAGEPSGDLLGASLLGGLHARLPASSRYYGIGGPRMSAVEFDAHWPMEKLAVRGYVEALKHIPEILRIRGELKRQLLAEPPDAFVGIDAPDFNFGLEQALRGAGIPTIHFVCPSIWAWRGGRIKKIVKAVDHMLCLFPFEPELLEKAGVAATFVGHPLADEIPLEPDTHGARIALGLPGGGPVIAVLPGSRRSEIELIGPTFFDAMELMQQREPGVRFVVPAATPALRALLQPLVDAHPSLSVTLTEGRAQVAMTAADAILVKSGTVTLEAALLKKPMVISYKVPWLTGQIMRRQGYLPYVGLPNILAGRFVVPELLQHFATPDALADATLTQLRDDANRRALADIFTDMHLALRQNTAQRAAEAVAHVIDSRKPR</sequence>
<feature type="chain" id="PRO_1000049389" description="Lipid-A-disaccharide synthase">
    <location>
        <begin position="1"/>
        <end position="388"/>
    </location>
</feature>
<dbReference type="EC" id="2.4.1.182" evidence="1"/>
<dbReference type="EMBL" id="CP000526">
    <property type="protein sequence ID" value="ABM52955.1"/>
    <property type="molecule type" value="Genomic_DNA"/>
</dbReference>
<dbReference type="RefSeq" id="WP_004192608.1">
    <property type="nucleotide sequence ID" value="NC_008785.1"/>
</dbReference>
<dbReference type="SMR" id="A1V555"/>
<dbReference type="CAZy" id="GT19">
    <property type="family name" value="Glycosyltransferase Family 19"/>
</dbReference>
<dbReference type="GeneID" id="92979268"/>
<dbReference type="KEGG" id="bmv:BMASAVP1_A2042"/>
<dbReference type="HOGENOM" id="CLU_036577_3_0_4"/>
<dbReference type="UniPathway" id="UPA00973"/>
<dbReference type="GO" id="GO:0016020">
    <property type="term" value="C:membrane"/>
    <property type="evidence" value="ECO:0007669"/>
    <property type="project" value="GOC"/>
</dbReference>
<dbReference type="GO" id="GO:0008915">
    <property type="term" value="F:lipid-A-disaccharide synthase activity"/>
    <property type="evidence" value="ECO:0007669"/>
    <property type="project" value="UniProtKB-UniRule"/>
</dbReference>
<dbReference type="GO" id="GO:0005543">
    <property type="term" value="F:phospholipid binding"/>
    <property type="evidence" value="ECO:0007669"/>
    <property type="project" value="TreeGrafter"/>
</dbReference>
<dbReference type="GO" id="GO:0009245">
    <property type="term" value="P:lipid A biosynthetic process"/>
    <property type="evidence" value="ECO:0007669"/>
    <property type="project" value="UniProtKB-UniRule"/>
</dbReference>
<dbReference type="HAMAP" id="MF_00392">
    <property type="entry name" value="LpxB"/>
    <property type="match status" value="1"/>
</dbReference>
<dbReference type="InterPro" id="IPR003835">
    <property type="entry name" value="Glyco_trans_19"/>
</dbReference>
<dbReference type="NCBIfam" id="TIGR00215">
    <property type="entry name" value="lpxB"/>
    <property type="match status" value="1"/>
</dbReference>
<dbReference type="PANTHER" id="PTHR30372">
    <property type="entry name" value="LIPID-A-DISACCHARIDE SYNTHASE"/>
    <property type="match status" value="1"/>
</dbReference>
<dbReference type="PANTHER" id="PTHR30372:SF4">
    <property type="entry name" value="LIPID-A-DISACCHARIDE SYNTHASE, MITOCHONDRIAL-RELATED"/>
    <property type="match status" value="1"/>
</dbReference>
<dbReference type="Pfam" id="PF02684">
    <property type="entry name" value="LpxB"/>
    <property type="match status" value="1"/>
</dbReference>
<dbReference type="SUPFAM" id="SSF53756">
    <property type="entry name" value="UDP-Glycosyltransferase/glycogen phosphorylase"/>
    <property type="match status" value="1"/>
</dbReference>
<reference key="1">
    <citation type="journal article" date="2010" name="Genome Biol. Evol.">
        <title>Continuing evolution of Burkholderia mallei through genome reduction and large-scale rearrangements.</title>
        <authorList>
            <person name="Losada L."/>
            <person name="Ronning C.M."/>
            <person name="DeShazer D."/>
            <person name="Woods D."/>
            <person name="Fedorova N."/>
            <person name="Kim H.S."/>
            <person name="Shabalina S.A."/>
            <person name="Pearson T.R."/>
            <person name="Brinkac L."/>
            <person name="Tan P."/>
            <person name="Nandi T."/>
            <person name="Crabtree J."/>
            <person name="Badger J."/>
            <person name="Beckstrom-Sternberg S."/>
            <person name="Saqib M."/>
            <person name="Schutzer S.E."/>
            <person name="Keim P."/>
            <person name="Nierman W.C."/>
        </authorList>
    </citation>
    <scope>NUCLEOTIDE SEQUENCE [LARGE SCALE GENOMIC DNA]</scope>
    <source>
        <strain>SAVP1</strain>
    </source>
</reference>
<gene>
    <name evidence="1" type="primary">lpxB</name>
    <name type="ordered locus">BMASAVP1_A2042</name>
</gene>
<keyword id="KW-0328">Glycosyltransferase</keyword>
<keyword id="KW-0441">Lipid A biosynthesis</keyword>
<keyword id="KW-0444">Lipid biosynthesis</keyword>
<keyword id="KW-0443">Lipid metabolism</keyword>
<keyword id="KW-0808">Transferase</keyword>
<protein>
    <recommendedName>
        <fullName evidence="1">Lipid-A-disaccharide synthase</fullName>
        <ecNumber evidence="1">2.4.1.182</ecNumber>
    </recommendedName>
</protein>
<comment type="function">
    <text evidence="1">Condensation of UDP-2,3-diacylglucosamine and 2,3-diacylglucosamine-1-phosphate to form lipid A disaccharide, a precursor of lipid A, a phosphorylated glycolipid that anchors the lipopolysaccharide to the outer membrane of the cell.</text>
</comment>
<comment type="catalytic activity">
    <reaction evidence="1">
        <text>a lipid X + a UDP-2-N,3-O-bis[(3R)-3-hydroxyacyl]-alpha-D-glucosamine = a lipid A disaccharide + UDP + H(+)</text>
        <dbReference type="Rhea" id="RHEA:67828"/>
        <dbReference type="ChEBI" id="CHEBI:15378"/>
        <dbReference type="ChEBI" id="CHEBI:58223"/>
        <dbReference type="ChEBI" id="CHEBI:137748"/>
        <dbReference type="ChEBI" id="CHEBI:176338"/>
        <dbReference type="ChEBI" id="CHEBI:176343"/>
        <dbReference type="EC" id="2.4.1.182"/>
    </reaction>
</comment>
<comment type="pathway">
    <text evidence="1">Bacterial outer membrane biogenesis; LPS lipid A biosynthesis.</text>
</comment>
<comment type="similarity">
    <text evidence="1">Belongs to the LpxB family.</text>
</comment>
<accession>A1V555</accession>